<keyword id="KW-0963">Cytoplasm</keyword>
<keyword id="KW-0256">Endoplasmic reticulum</keyword>
<keyword id="KW-0379">Hydroxylation</keyword>
<keyword id="KW-1185">Reference proteome</keyword>
<keyword id="KW-0687">Ribonucleoprotein</keyword>
<keyword id="KW-0689">Ribosomal protein</keyword>
<organism>
    <name type="scientific">Brugia malayi</name>
    <name type="common">Filarial nematode worm</name>
    <dbReference type="NCBI Taxonomy" id="6279"/>
    <lineage>
        <taxon>Eukaryota</taxon>
        <taxon>Metazoa</taxon>
        <taxon>Ecdysozoa</taxon>
        <taxon>Nematoda</taxon>
        <taxon>Chromadorea</taxon>
        <taxon>Rhabditida</taxon>
        <taxon>Spirurina</taxon>
        <taxon>Spiruromorpha</taxon>
        <taxon>Filarioidea</taxon>
        <taxon>Onchocercidae</taxon>
        <taxon>Brugia</taxon>
    </lineage>
</organism>
<name>RS23_BRUMA</name>
<feature type="chain" id="PRO_0000146469" description="Small ribosomal subunit protein uS12">
    <location>
        <begin position="1"/>
        <end position="143"/>
    </location>
</feature>
<feature type="region of interest" description="Disordered" evidence="4">
    <location>
        <begin position="1"/>
        <end position="21"/>
    </location>
</feature>
<feature type="compositionally biased region" description="Basic residues" evidence="4">
    <location>
        <begin position="1"/>
        <end position="19"/>
    </location>
</feature>
<feature type="modified residue" description="Hydroxyproline" evidence="1">
    <location>
        <position position="62"/>
    </location>
</feature>
<comment type="subunit">
    <text evidence="3">Component of the 40S small ribosomal subunit.</text>
</comment>
<comment type="subcellular location">
    <subcellularLocation>
        <location evidence="2">Cytoplasm</location>
        <location evidence="2">Cytosol</location>
    </subcellularLocation>
    <subcellularLocation>
        <location evidence="2">Cytoplasm</location>
    </subcellularLocation>
    <subcellularLocation>
        <location evidence="3">Rough endoplasmic reticulum</location>
    </subcellularLocation>
    <text evidence="2 3">Detected on cytosolic polysomes (By similarity). Detected in ribosomes that are associated with the rough endoplasmic reticulum (By similarity).</text>
</comment>
<comment type="similarity">
    <text evidence="5">Belongs to the universal ribosomal protein uS12 family.</text>
</comment>
<proteinExistence type="evidence at transcript level"/>
<evidence type="ECO:0000250" key="1"/>
<evidence type="ECO:0000250" key="2">
    <source>
        <dbReference type="UniProtKB" id="P62266"/>
    </source>
</evidence>
<evidence type="ECO:0000250" key="3">
    <source>
        <dbReference type="UniProtKB" id="Q6SA96"/>
    </source>
</evidence>
<evidence type="ECO:0000256" key="4">
    <source>
        <dbReference type="SAM" id="MobiDB-lite"/>
    </source>
</evidence>
<evidence type="ECO:0000305" key="5"/>
<dbReference type="EMBL" id="U81008">
    <property type="protein sequence ID" value="AAC47632.1"/>
    <property type="molecule type" value="mRNA"/>
</dbReference>
<dbReference type="SMR" id="P90707"/>
<dbReference type="FunCoup" id="P90707">
    <property type="interactions" value="1456"/>
</dbReference>
<dbReference type="STRING" id="6279.P90707"/>
<dbReference type="InParanoid" id="P90707"/>
<dbReference type="Proteomes" id="UP000006672">
    <property type="component" value="Unassembled WGS sequence"/>
</dbReference>
<dbReference type="GO" id="GO:0022627">
    <property type="term" value="C:cytosolic small ribosomal subunit"/>
    <property type="evidence" value="ECO:0000250"/>
    <property type="project" value="UniProtKB"/>
</dbReference>
<dbReference type="GO" id="GO:0005791">
    <property type="term" value="C:rough endoplasmic reticulum"/>
    <property type="evidence" value="ECO:0007669"/>
    <property type="project" value="UniProtKB-SubCell"/>
</dbReference>
<dbReference type="GO" id="GO:0003735">
    <property type="term" value="F:structural constituent of ribosome"/>
    <property type="evidence" value="ECO:0007669"/>
    <property type="project" value="InterPro"/>
</dbReference>
<dbReference type="GO" id="GO:0002181">
    <property type="term" value="P:cytoplasmic translation"/>
    <property type="evidence" value="ECO:0000250"/>
    <property type="project" value="UniProtKB"/>
</dbReference>
<dbReference type="CDD" id="cd03367">
    <property type="entry name" value="Ribosomal_S23"/>
    <property type="match status" value="1"/>
</dbReference>
<dbReference type="FunFam" id="2.40.50.140:FF:000007">
    <property type="entry name" value="40S ribosomal protein S23"/>
    <property type="match status" value="1"/>
</dbReference>
<dbReference type="Gene3D" id="2.40.50.140">
    <property type="entry name" value="Nucleic acid-binding proteins"/>
    <property type="match status" value="1"/>
</dbReference>
<dbReference type="InterPro" id="IPR012340">
    <property type="entry name" value="NA-bd_OB-fold"/>
</dbReference>
<dbReference type="InterPro" id="IPR006032">
    <property type="entry name" value="Ribosomal_uS12"/>
</dbReference>
<dbReference type="InterPro" id="IPR005680">
    <property type="entry name" value="Ribosomal_uS12_euk/arc"/>
</dbReference>
<dbReference type="NCBIfam" id="NF003254">
    <property type="entry name" value="PRK04211.1"/>
    <property type="match status" value="1"/>
</dbReference>
<dbReference type="NCBIfam" id="TIGR00982">
    <property type="entry name" value="uS12_E_A"/>
    <property type="match status" value="1"/>
</dbReference>
<dbReference type="PANTHER" id="PTHR11652">
    <property type="entry name" value="30S RIBOSOMAL PROTEIN S12 FAMILY MEMBER"/>
    <property type="match status" value="1"/>
</dbReference>
<dbReference type="Pfam" id="PF00164">
    <property type="entry name" value="Ribosom_S12_S23"/>
    <property type="match status" value="1"/>
</dbReference>
<dbReference type="PIRSF" id="PIRSF002133">
    <property type="entry name" value="Ribosomal_S12/S23"/>
    <property type="match status" value="1"/>
</dbReference>
<dbReference type="SUPFAM" id="SSF50249">
    <property type="entry name" value="Nucleic acid-binding proteins"/>
    <property type="match status" value="1"/>
</dbReference>
<dbReference type="PROSITE" id="PS00055">
    <property type="entry name" value="RIBOSOMAL_S12"/>
    <property type="match status" value="1"/>
</dbReference>
<protein>
    <recommendedName>
        <fullName evidence="5">Small ribosomal subunit protein uS12</fullName>
    </recommendedName>
    <alternativeName>
        <fullName>40S ribosomal protein S23</fullName>
    </alternativeName>
</protein>
<accession>P90707</accession>
<reference key="1">
    <citation type="journal article" date="1997" name="Mol. Biochem. Parasitol.">
        <title>Differentially expressed, abundant trans-spliced cDNAs from larval Brugia malayi.</title>
        <authorList>
            <person name="Gregory W.F."/>
            <person name="Blaxter M.L."/>
            <person name="Maizels R.M."/>
        </authorList>
    </citation>
    <scope>NUCLEOTIDE SEQUENCE [MRNA]</scope>
</reference>
<gene>
    <name type="primary">rps-23</name>
</gene>
<sequence length="143" mass="15794">MGKPKGIRAARKLKTHRQAQRWNDKGYKKAHLGTRWKANPFGTASHAKGIVLEKVGVEAKQPNSAIRKCVRVQLIKNGKKITAFVPNDGCLNFIEENDEVLVAGFGRKGHAVGDIPGVRFKIVKVANTSLIALFKGKKERPRS</sequence>